<name>PRVB2_MERPA</name>
<dbReference type="SMR" id="P86769"/>
<dbReference type="iPTMnet" id="P86769"/>
<dbReference type="GO" id="GO:0005737">
    <property type="term" value="C:cytoplasm"/>
    <property type="evidence" value="ECO:0007669"/>
    <property type="project" value="TreeGrafter"/>
</dbReference>
<dbReference type="GO" id="GO:0005509">
    <property type="term" value="F:calcium ion binding"/>
    <property type="evidence" value="ECO:0007669"/>
    <property type="project" value="InterPro"/>
</dbReference>
<dbReference type="FunFam" id="1.10.238.10:FF:000060">
    <property type="entry name" value="Parvalbumin, thymic"/>
    <property type="match status" value="1"/>
</dbReference>
<dbReference type="Gene3D" id="1.10.238.10">
    <property type="entry name" value="EF-hand"/>
    <property type="match status" value="1"/>
</dbReference>
<dbReference type="InterPro" id="IPR011992">
    <property type="entry name" value="EF-hand-dom_pair"/>
</dbReference>
<dbReference type="InterPro" id="IPR018247">
    <property type="entry name" value="EF_Hand_1_Ca_BS"/>
</dbReference>
<dbReference type="InterPro" id="IPR002048">
    <property type="entry name" value="EF_hand_dom"/>
</dbReference>
<dbReference type="InterPro" id="IPR008080">
    <property type="entry name" value="Parvalbumin"/>
</dbReference>
<dbReference type="PANTHER" id="PTHR11653:SF12">
    <property type="entry name" value="PARVALBUMIN"/>
    <property type="match status" value="1"/>
</dbReference>
<dbReference type="PANTHER" id="PTHR11653">
    <property type="entry name" value="PARVALBUMIN ALPHA"/>
    <property type="match status" value="1"/>
</dbReference>
<dbReference type="Pfam" id="PF13499">
    <property type="entry name" value="EF-hand_7"/>
    <property type="match status" value="1"/>
</dbReference>
<dbReference type="PRINTS" id="PR01697">
    <property type="entry name" value="PARVALBUMIN"/>
</dbReference>
<dbReference type="SMART" id="SM00054">
    <property type="entry name" value="EFh"/>
    <property type="match status" value="2"/>
</dbReference>
<dbReference type="SUPFAM" id="SSF47473">
    <property type="entry name" value="EF-hand"/>
    <property type="match status" value="1"/>
</dbReference>
<dbReference type="PROSITE" id="PS00018">
    <property type="entry name" value="EF_HAND_1"/>
    <property type="match status" value="2"/>
</dbReference>
<dbReference type="PROSITE" id="PS50222">
    <property type="entry name" value="EF_HAND_2"/>
    <property type="match status" value="2"/>
</dbReference>
<keyword id="KW-0007">Acetylation</keyword>
<keyword id="KW-0020">Allergen</keyword>
<keyword id="KW-0106">Calcium</keyword>
<keyword id="KW-0903">Direct protein sequencing</keyword>
<keyword id="KW-0479">Metal-binding</keyword>
<keyword id="KW-0514">Muscle protein</keyword>
<keyword id="KW-0677">Repeat</keyword>
<feature type="chain" id="PRO_0000399429" description="Parvalbumin beta 2">
    <location>
        <begin position="1"/>
        <end position="108"/>
    </location>
</feature>
<feature type="domain" description="EF-hand 1" evidence="5">
    <location>
        <begin position="38"/>
        <end position="73"/>
    </location>
</feature>
<feature type="domain" description="EF-hand 2" evidence="5">
    <location>
        <begin position="77"/>
        <end position="108"/>
    </location>
</feature>
<feature type="binding site" evidence="1 5">
    <location>
        <position position="51"/>
    </location>
    <ligand>
        <name>Ca(2+)</name>
        <dbReference type="ChEBI" id="CHEBI:29108"/>
        <label>1</label>
    </ligand>
</feature>
<feature type="binding site" evidence="1 5">
    <location>
        <position position="53"/>
    </location>
    <ligand>
        <name>Ca(2+)</name>
        <dbReference type="ChEBI" id="CHEBI:29108"/>
        <label>1</label>
    </ligand>
</feature>
<feature type="binding site" evidence="1 5">
    <location>
        <position position="55"/>
    </location>
    <ligand>
        <name>Ca(2+)</name>
        <dbReference type="ChEBI" id="CHEBI:29108"/>
        <label>1</label>
    </ligand>
</feature>
<feature type="binding site" evidence="1">
    <location>
        <position position="57"/>
    </location>
    <ligand>
        <name>Ca(2+)</name>
        <dbReference type="ChEBI" id="CHEBI:29108"/>
        <label>1</label>
    </ligand>
</feature>
<feature type="binding site" evidence="1">
    <location>
        <position position="59"/>
    </location>
    <ligand>
        <name>Ca(2+)</name>
        <dbReference type="ChEBI" id="CHEBI:29108"/>
        <label>1</label>
    </ligand>
</feature>
<feature type="binding site" evidence="1 5">
    <location>
        <position position="62"/>
    </location>
    <ligand>
        <name>Ca(2+)</name>
        <dbReference type="ChEBI" id="CHEBI:29108"/>
        <label>1</label>
    </ligand>
</feature>
<feature type="binding site" evidence="1 5">
    <location>
        <position position="90"/>
    </location>
    <ligand>
        <name>Ca(2+)</name>
        <dbReference type="ChEBI" id="CHEBI:29108"/>
        <label>2</label>
    </ligand>
</feature>
<feature type="binding site" evidence="1 5">
    <location>
        <position position="92"/>
    </location>
    <ligand>
        <name>Ca(2+)</name>
        <dbReference type="ChEBI" id="CHEBI:29108"/>
        <label>2</label>
    </ligand>
</feature>
<feature type="binding site" evidence="1 5">
    <location>
        <position position="94"/>
    </location>
    <ligand>
        <name>Ca(2+)</name>
        <dbReference type="ChEBI" id="CHEBI:29108"/>
        <label>2</label>
    </ligand>
</feature>
<feature type="binding site" evidence="1">
    <location>
        <position position="96"/>
    </location>
    <ligand>
        <name>Ca(2+)</name>
        <dbReference type="ChEBI" id="CHEBI:29108"/>
        <label>2</label>
    </ligand>
</feature>
<feature type="binding site" evidence="1 5">
    <location>
        <position position="101"/>
    </location>
    <ligand>
        <name>Ca(2+)</name>
        <dbReference type="ChEBI" id="CHEBI:29108"/>
        <label>2</label>
    </ligand>
</feature>
<feature type="modified residue" description="N-acetylalanine" evidence="6">
    <location>
        <position position="1"/>
    </location>
</feature>
<feature type="unsure residue" description="I or L" evidence="6">
    <location>
        <position position="5"/>
    </location>
</feature>
<feature type="unsure residue" description="L or I" evidence="6">
    <location>
        <position position="6"/>
    </location>
</feature>
<feature type="unsure residue" description="I or L" evidence="6">
    <location>
        <position position="11"/>
    </location>
</feature>
<feature type="unsure residue" description="L or I" evidence="6">
    <location>
        <position position="15"/>
    </location>
</feature>
<feature type="unsure residue" description="K or Q" evidence="6">
    <location>
        <position position="16"/>
    </location>
</feature>
<feature type="unsure residue" description="K or Q" evidence="6">
    <location>
        <position position="27"/>
    </location>
</feature>
<feature type="unsure residue" description="K or Q" evidence="6">
    <location>
        <position position="32"/>
    </location>
</feature>
<feature type="unsure residue" description="L or I" evidence="6">
    <location>
        <position position="35"/>
    </location>
</feature>
<feature type="unsure residue" description="K or Q" evidence="6">
    <location>
        <position position="38"/>
    </location>
</feature>
<feature type="unsure residue" description="I or L" evidence="6">
    <location>
        <position position="43"/>
    </location>
</feature>
<feature type="unsure residue" description="K or Q" evidence="6">
    <location>
        <position position="44"/>
    </location>
</feature>
<feature type="unsure residue" description="K or Q" evidence="6">
    <location>
        <position position="45"/>
    </location>
</feature>
<feature type="unsure residue" description="I or L" evidence="6">
    <location>
        <position position="50"/>
    </location>
</feature>
<feature type="unsure residue" description="Q or K" evidence="6">
    <location>
        <position position="52"/>
    </location>
</feature>
<feature type="unsure residue" description="K or Q" evidence="6">
    <location>
        <position position="54"/>
    </location>
</feature>
<feature type="unsure residue" description="I or L" evidence="6">
    <location>
        <position position="58"/>
    </location>
</feature>
<feature type="unsure residue" description="L or I" evidence="6">
    <location>
        <position position="63"/>
    </location>
</feature>
<feature type="unsure residue" description="K or Q" evidence="6">
    <location>
        <position position="64"/>
    </location>
</feature>
<feature type="unsure residue" description="L or I" evidence="6">
    <location>
        <position position="65"/>
    </location>
</feature>
<feature type="unsure residue" description="L or I" evidence="6">
    <location>
        <position position="67"/>
    </location>
</feature>
<feature type="unsure residue" description="Q or K" evidence="6">
    <location>
        <position position="68"/>
    </location>
</feature>
<feature type="unsure residue" description="L or I" evidence="6">
    <location>
        <position position="77"/>
    </location>
</feature>
<feature type="unsure residue" description="K or Q" evidence="6">
    <location>
        <position position="83"/>
    </location>
</feature>
<feature type="unsure residue" description="L or I" evidence="6">
    <location>
        <position position="86"/>
    </location>
</feature>
<feature type="unsure residue" description="K or Q" evidence="6">
    <location>
        <position position="87"/>
    </location>
</feature>
<feature type="unsure residue" description="I or L" evidence="6">
    <location>
        <position position="97"/>
    </location>
</feature>
<feature type="unsure residue" description="L or I" evidence="6">
    <location>
        <position position="105"/>
    </location>
</feature>
<feature type="unsure residue" description="K or Q" evidence="6">
    <location>
        <position position="107"/>
    </location>
</feature>
<reference evidence="8" key="1">
    <citation type="journal article" date="2010" name="J. Proteome Res.">
        <title>Extensive de novo sequencing of new parvalbumin isoforms using a novel combination of bottom-up proteomics, accurate molecular mass measurement by FTICR-MS, and selected MS/MS ion monitoring.</title>
        <authorList>
            <person name="Carrera M."/>
            <person name="Canas B."/>
            <person name="Vazquez J."/>
            <person name="Gallardo J.M."/>
        </authorList>
    </citation>
    <scope>PROTEIN SEQUENCE</scope>
    <scope>MASS SPECTROMETRY</scope>
    <scope>ACETYLATION AT ALA-1</scope>
    <source>
        <tissue evidence="6">Muscle</tissue>
    </source>
</reference>
<sequence length="108" mass="11331">AFSGILAEADIAAALKACEAAGTFNYKAFFAKVGLTGKSADDIKKAFFVIDQDKSGFIEEDELKLFLQVFSAGARALTDDETKAFLKAGDSDGDGAIGVDEWAALVKA</sequence>
<comment type="function">
    <text evidence="2 3">In muscle, parvalbumin is thought to be involved in relaxation after contraction. It binds two calcium ions (By similarity).</text>
</comment>
<comment type="mass spectrometry" mass="11365.808" error="0.0386" method="Electrospray" evidence="6"/>
<comment type="miscellaneous">
    <text evidence="2 6">Is regarded as an important allergen.</text>
</comment>
<comment type="miscellaneous">
    <text evidence="6">On the 2D-gel the determined pI of this protein is: 4.16, its MW is: 11.35 kDa.</text>
</comment>
<comment type="similarity">
    <text evidence="4">Belongs to the parvalbumin family.</text>
</comment>
<proteinExistence type="evidence at protein level"/>
<protein>
    <recommendedName>
        <fullName evidence="7">Parvalbumin beta 2</fullName>
    </recommendedName>
</protein>
<evidence type="ECO:0000250" key="1">
    <source>
        <dbReference type="UniProtKB" id="P02621"/>
    </source>
</evidence>
<evidence type="ECO:0000250" key="2">
    <source>
        <dbReference type="UniProtKB" id="P02622"/>
    </source>
</evidence>
<evidence type="ECO:0000250" key="3">
    <source>
        <dbReference type="UniProtKB" id="P02624"/>
    </source>
</evidence>
<evidence type="ECO:0000255" key="4"/>
<evidence type="ECO:0000255" key="5">
    <source>
        <dbReference type="PROSITE-ProRule" id="PRU00448"/>
    </source>
</evidence>
<evidence type="ECO:0000269" key="6">
    <source>
    </source>
</evidence>
<evidence type="ECO:0000303" key="7">
    <source>
    </source>
</evidence>
<evidence type="ECO:0000305" key="8"/>
<organism>
    <name type="scientific">Merluccius paradoxus</name>
    <name type="common">Deep-water Cape hake</name>
    <name type="synonym">Merluccius capensis paradoxus</name>
    <dbReference type="NCBI Taxonomy" id="89950"/>
    <lineage>
        <taxon>Eukaryota</taxon>
        <taxon>Metazoa</taxon>
        <taxon>Chordata</taxon>
        <taxon>Craniata</taxon>
        <taxon>Vertebrata</taxon>
        <taxon>Euteleostomi</taxon>
        <taxon>Actinopterygii</taxon>
        <taxon>Neopterygii</taxon>
        <taxon>Teleostei</taxon>
        <taxon>Neoteleostei</taxon>
        <taxon>Acanthomorphata</taxon>
        <taxon>Zeiogadaria</taxon>
        <taxon>Gadariae</taxon>
        <taxon>Gadiformes</taxon>
        <taxon>Gadoidei</taxon>
        <taxon>Merlucciidae</taxon>
        <taxon>Merluccius</taxon>
    </lineage>
</organism>
<accession>P86769</accession>